<dbReference type="EC" id="3.1.27.-" evidence="6"/>
<dbReference type="EMBL" id="EU814502">
    <property type="protein sequence ID" value="ACJ26823.1"/>
    <property type="molecule type" value="mRNA"/>
</dbReference>
<dbReference type="PIR" id="JC2034">
    <property type="entry name" value="JC2034"/>
</dbReference>
<dbReference type="RefSeq" id="NP_001161128.1">
    <property type="nucleotide sequence ID" value="NM_001167656.1"/>
</dbReference>
<dbReference type="SMR" id="P81649"/>
<dbReference type="FunCoup" id="P81649">
    <property type="interactions" value="118"/>
</dbReference>
<dbReference type="STRING" id="9823.ENSSSCP00000071780"/>
<dbReference type="GlyCosmos" id="P81649">
    <property type="glycosylation" value="3 sites, No reported glycans"/>
</dbReference>
<dbReference type="GlyGen" id="P81649">
    <property type="glycosylation" value="3 sites"/>
</dbReference>
<dbReference type="iPTMnet" id="P81649"/>
<dbReference type="PaxDb" id="9823-ENSSSCP00000027994"/>
<dbReference type="PeptideAtlas" id="P81649"/>
<dbReference type="GeneID" id="100312981"/>
<dbReference type="KEGG" id="ssc:100312981"/>
<dbReference type="CTD" id="6039"/>
<dbReference type="eggNOG" id="ENOG502TDZ3">
    <property type="taxonomic scope" value="Eukaryota"/>
</dbReference>
<dbReference type="InParanoid" id="P81649"/>
<dbReference type="OrthoDB" id="9445034at2759"/>
<dbReference type="Proteomes" id="UP000008227">
    <property type="component" value="Unplaced"/>
</dbReference>
<dbReference type="Proteomes" id="UP000314985">
    <property type="component" value="Unplaced"/>
</dbReference>
<dbReference type="Proteomes" id="UP000694570">
    <property type="component" value="Unplaced"/>
</dbReference>
<dbReference type="Proteomes" id="UP000694571">
    <property type="component" value="Unplaced"/>
</dbReference>
<dbReference type="Proteomes" id="UP000694720">
    <property type="component" value="Unplaced"/>
</dbReference>
<dbReference type="Proteomes" id="UP000694722">
    <property type="component" value="Unplaced"/>
</dbReference>
<dbReference type="Proteomes" id="UP000694723">
    <property type="component" value="Unplaced"/>
</dbReference>
<dbReference type="Proteomes" id="UP000694724">
    <property type="component" value="Unplaced"/>
</dbReference>
<dbReference type="Proteomes" id="UP000694725">
    <property type="component" value="Unplaced"/>
</dbReference>
<dbReference type="Proteomes" id="UP000694726">
    <property type="component" value="Unplaced"/>
</dbReference>
<dbReference type="Proteomes" id="UP000694727">
    <property type="component" value="Unplaced"/>
</dbReference>
<dbReference type="Proteomes" id="UP000694728">
    <property type="component" value="Unplaced"/>
</dbReference>
<dbReference type="GO" id="GO:0005615">
    <property type="term" value="C:extracellular space"/>
    <property type="evidence" value="ECO:0000318"/>
    <property type="project" value="GO_Central"/>
</dbReference>
<dbReference type="GO" id="GO:0005764">
    <property type="term" value="C:lysosome"/>
    <property type="evidence" value="ECO:0007669"/>
    <property type="project" value="UniProtKB-SubCell"/>
</dbReference>
<dbReference type="GO" id="GO:0004519">
    <property type="term" value="F:endonuclease activity"/>
    <property type="evidence" value="ECO:0007669"/>
    <property type="project" value="UniProtKB-KW"/>
</dbReference>
<dbReference type="GO" id="GO:0003676">
    <property type="term" value="F:nucleic acid binding"/>
    <property type="evidence" value="ECO:0007669"/>
    <property type="project" value="InterPro"/>
</dbReference>
<dbReference type="GO" id="GO:0004540">
    <property type="term" value="F:RNA nuclease activity"/>
    <property type="evidence" value="ECO:0000318"/>
    <property type="project" value="GO_Central"/>
</dbReference>
<dbReference type="GO" id="GO:0019731">
    <property type="term" value="P:antibacterial humoral response"/>
    <property type="evidence" value="ECO:0000318"/>
    <property type="project" value="GO_Central"/>
</dbReference>
<dbReference type="GO" id="GO:0061844">
    <property type="term" value="P:antimicrobial humoral immune response mediated by antimicrobial peptide"/>
    <property type="evidence" value="ECO:0000318"/>
    <property type="project" value="GO_Central"/>
</dbReference>
<dbReference type="GO" id="GO:0050829">
    <property type="term" value="P:defense response to Gram-negative bacterium"/>
    <property type="evidence" value="ECO:0000318"/>
    <property type="project" value="GO_Central"/>
</dbReference>
<dbReference type="GO" id="GO:0050830">
    <property type="term" value="P:defense response to Gram-positive bacterium"/>
    <property type="evidence" value="ECO:0000318"/>
    <property type="project" value="GO_Central"/>
</dbReference>
<dbReference type="GO" id="GO:0045087">
    <property type="term" value="P:innate immune response"/>
    <property type="evidence" value="ECO:0000318"/>
    <property type="project" value="GO_Central"/>
</dbReference>
<dbReference type="CDD" id="cd06265">
    <property type="entry name" value="RNase_A_canonical"/>
    <property type="match status" value="1"/>
</dbReference>
<dbReference type="FunFam" id="3.10.130.10:FF:000001">
    <property type="entry name" value="Ribonuclease pancreatic"/>
    <property type="match status" value="1"/>
</dbReference>
<dbReference type="Gene3D" id="3.10.130.10">
    <property type="entry name" value="Ribonuclease A-like domain"/>
    <property type="match status" value="1"/>
</dbReference>
<dbReference type="InterPro" id="IPR001427">
    <property type="entry name" value="RNaseA"/>
</dbReference>
<dbReference type="InterPro" id="IPR036816">
    <property type="entry name" value="RNaseA-like_dom_sf"/>
</dbReference>
<dbReference type="InterPro" id="IPR023411">
    <property type="entry name" value="RNaseA_AS"/>
</dbReference>
<dbReference type="InterPro" id="IPR023412">
    <property type="entry name" value="RNaseA_domain"/>
</dbReference>
<dbReference type="PANTHER" id="PTHR11437">
    <property type="entry name" value="RIBONUCLEASE"/>
    <property type="match status" value="1"/>
</dbReference>
<dbReference type="PANTHER" id="PTHR11437:SF4">
    <property type="entry name" value="RIBONUCLEASE K6"/>
    <property type="match status" value="1"/>
</dbReference>
<dbReference type="Pfam" id="PF00074">
    <property type="entry name" value="RnaseA"/>
    <property type="match status" value="1"/>
</dbReference>
<dbReference type="PRINTS" id="PR00794">
    <property type="entry name" value="RIBONUCLEASE"/>
</dbReference>
<dbReference type="SMART" id="SM00092">
    <property type="entry name" value="RNAse_Pc"/>
    <property type="match status" value="1"/>
</dbReference>
<dbReference type="SUPFAM" id="SSF54076">
    <property type="entry name" value="RNase A-like"/>
    <property type="match status" value="1"/>
</dbReference>
<dbReference type="PROSITE" id="PS00127">
    <property type="entry name" value="RNASE_PANCREATIC"/>
    <property type="match status" value="1"/>
</dbReference>
<reference key="1">
    <citation type="journal article" date="2009" name="Mol. Biol. Rep.">
        <title>The porcine ANG, RNASE1 and RNASE6 genes: molecular cloning, polymorphism detection and the association with haematological parameters.</title>
        <authorList>
            <person name="Bai X."/>
            <person name="Liang Z."/>
            <person name="Zhao S."/>
            <person name="Liu X."/>
            <person name="Zhu M."/>
            <person name="Wu Z."/>
            <person name="Yu M."/>
        </authorList>
    </citation>
    <scope>NUCLEOTIDE SEQUENCE [MRNA]</scope>
</reference>
<reference key="2">
    <citation type="journal article" date="1993" name="Biosci. Biotechnol. Biochem.">
        <title>Purification and primary structure of a porcine kidney non-secretory ribonuclease.</title>
        <authorList>
            <person name="Iwama M."/>
            <person name="Sanda A."/>
            <person name="Ohgi K."/>
            <person name="Hofsteenge J."/>
            <person name="Irie M."/>
        </authorList>
    </citation>
    <scope>PROTEIN SEQUENCE OF 27-152</scope>
    <scope>FUNCTION</scope>
    <scope>CATALYTIC ACTIVITY</scope>
    <scope>GLYCOSYLATION AT ASN-30; ASN-58 AND ASN-85</scope>
    <source>
        <tissue>Kidney</tissue>
    </source>
</reference>
<sequence length="153" mass="17350">MGPDLRCFPLLLLLLGLWWSVRPLCAIPKNLTRAQWFTIQHIQPSPLQCNKAMNSVNNYTWHCKPQNTFLHDSFQDVATACNLPNITCKNGQNNCHQSAKPVSLTQCSFTGGNYPNCRYKDAAQYKFFIVACDPPQKGDPPYPFVPVHLDKII</sequence>
<protein>
    <recommendedName>
        <fullName>Ribonuclease K3</fullName>
        <shortName>RNase K3</shortName>
        <ecNumber evidence="6">3.1.27.-</ecNumber>
    </recommendedName>
</protein>
<proteinExistence type="evidence at protein level"/>
<organism>
    <name type="scientific">Sus scrofa</name>
    <name type="common">Pig</name>
    <dbReference type="NCBI Taxonomy" id="9823"/>
    <lineage>
        <taxon>Eukaryota</taxon>
        <taxon>Metazoa</taxon>
        <taxon>Chordata</taxon>
        <taxon>Craniata</taxon>
        <taxon>Vertebrata</taxon>
        <taxon>Euteleostomi</taxon>
        <taxon>Mammalia</taxon>
        <taxon>Eutheria</taxon>
        <taxon>Laurasiatheria</taxon>
        <taxon>Artiodactyla</taxon>
        <taxon>Suina</taxon>
        <taxon>Suidae</taxon>
        <taxon>Sus</taxon>
    </lineage>
</organism>
<accession>P81649</accession>
<accession>D0PSF9</accession>
<keyword id="KW-0044">Antibiotic</keyword>
<keyword id="KW-0929">Antimicrobial</keyword>
<keyword id="KW-0903">Direct protein sequencing</keyword>
<keyword id="KW-1015">Disulfide bond</keyword>
<keyword id="KW-0255">Endonuclease</keyword>
<keyword id="KW-0325">Glycoprotein</keyword>
<keyword id="KW-0378">Hydrolase</keyword>
<keyword id="KW-0458">Lysosome</keyword>
<keyword id="KW-0540">Nuclease</keyword>
<keyword id="KW-1185">Reference proteome</keyword>
<keyword id="KW-0964">Secreted</keyword>
<keyword id="KW-0732">Signal</keyword>
<evidence type="ECO:0000250" key="1"/>
<evidence type="ECO:0000250" key="2">
    <source>
        <dbReference type="UniProtKB" id="Q64438"/>
    </source>
</evidence>
<evidence type="ECO:0000250" key="3">
    <source>
        <dbReference type="UniProtKB" id="Q93091"/>
    </source>
</evidence>
<evidence type="ECO:0000250" key="4">
    <source>
        <dbReference type="UniProtKB" id="Q9H1E1"/>
    </source>
</evidence>
<evidence type="ECO:0000269" key="5">
    <source>
    </source>
</evidence>
<evidence type="ECO:0000269" key="6">
    <source>
    </source>
</evidence>
<evidence type="ECO:0000305" key="7"/>
<gene>
    <name type="primary">RNASE6</name>
    <name type="synonym">RNS6</name>
</gene>
<name>RNAS6_PIG</name>
<feature type="signal peptide" evidence="5">
    <location>
        <begin position="1"/>
        <end position="26"/>
    </location>
</feature>
<feature type="chain" id="PRO_0000057163" description="Ribonuclease K3">
    <location>
        <begin position="27"/>
        <end position="153"/>
    </location>
</feature>
<feature type="active site" description="Proton acceptor" evidence="2">
    <location>
        <position position="41"/>
    </location>
</feature>
<feature type="active site" description="Proton donor" evidence="2">
    <location>
        <position position="148"/>
    </location>
</feature>
<feature type="binding site" evidence="1">
    <location>
        <begin position="64"/>
        <end position="68"/>
    </location>
    <ligand>
        <name>substrate</name>
    </ligand>
</feature>
<feature type="binding site" evidence="1">
    <location>
        <position position="89"/>
    </location>
    <ligand>
        <name>substrate</name>
    </ligand>
</feature>
<feature type="site" description="Facilitates cleavage of polynucleotide substrates" evidence="3">
    <location>
        <position position="62"/>
    </location>
</feature>
<feature type="site" description="Critical for catalytic activity" evidence="4">
    <location>
        <position position="64"/>
    </location>
</feature>
<feature type="glycosylation site" description="N-linked (GlcNAc...) asparagine" evidence="6">
    <location>
        <position position="30"/>
    </location>
</feature>
<feature type="glycosylation site" description="N-linked (GlcNAc...) asparagine" evidence="6">
    <location>
        <position position="58"/>
    </location>
</feature>
<feature type="glycosylation site" description="N-linked (GlcNAc...) asparagine" evidence="6">
    <location>
        <position position="85"/>
    </location>
</feature>
<feature type="disulfide bond" evidence="3">
    <location>
        <begin position="49"/>
        <end position="107"/>
    </location>
</feature>
<feature type="disulfide bond" evidence="3">
    <location>
        <begin position="63"/>
        <end position="117"/>
    </location>
</feature>
<feature type="disulfide bond" evidence="3">
    <location>
        <begin position="81"/>
        <end position="132"/>
    </location>
</feature>
<feature type="disulfide bond" evidence="3">
    <location>
        <begin position="88"/>
        <end position="95"/>
    </location>
</feature>
<feature type="sequence conflict" description="In Ref. 2; AA sequence." evidence="7" ref="2">
    <original>S</original>
    <variation>G</variation>
    <location>
        <position position="55"/>
    </location>
</feature>
<feature type="sequence conflict" description="In Ref. 2; AA sequence." evidence="7" ref="2">
    <original>S</original>
    <variation>N</variation>
    <location>
        <position position="108"/>
    </location>
</feature>
<comment type="function">
    <text evidence="3 6">Ribonuclease which shows a preference for the pyrimidines uridine and cytosine (PubMed:7764367). Has potent antibacterial activity against a range of Gram-positive and Gram-negative bacteria, including P.aeruginosa, A.baumanii, M.luteus, S.aureus, E.faecalis, E.faecium, S.saprophyticus and E.coli (By similarity). Causes loss of bacterial membrane integrity, and also promotes agglutination of Gram-negative bacteria (By similarity). Probably contributes to urinary tract sterility (By similarity). Bactericidal activity is independent of RNase activity (By similarity).</text>
</comment>
<comment type="subunit">
    <text evidence="3">Interacts (via N-terminus) with bacterial lipopolysaccharide (LPS).</text>
</comment>
<comment type="subcellular location">
    <subcellularLocation>
        <location evidence="3">Secreted</location>
    </subcellularLocation>
    <subcellularLocation>
        <location evidence="3">Lysosome</location>
    </subcellularLocation>
    <subcellularLocation>
        <location evidence="3">Cytoplasmic granule</location>
    </subcellularLocation>
</comment>
<comment type="tissue specificity">
    <text>Kidney.</text>
</comment>
<comment type="similarity">
    <text evidence="7">Belongs to the pancreatic ribonuclease family.</text>
</comment>